<protein>
    <recommendedName>
        <fullName evidence="1">Ribosomal RNA large subunit methyltransferase M</fullName>
        <ecNumber evidence="1">2.1.1.186</ecNumber>
    </recommendedName>
    <alternativeName>
        <fullName evidence="1">23S rRNA (cytidine2498-2'-O)-methyltransferase</fullName>
    </alternativeName>
    <alternativeName>
        <fullName evidence="1">23S rRNA 2'-O-ribose methyltransferase RlmM</fullName>
    </alternativeName>
</protein>
<name>RLMM_SHIDS</name>
<evidence type="ECO:0000255" key="1">
    <source>
        <dbReference type="HAMAP-Rule" id="MF_01551"/>
    </source>
</evidence>
<accession>Q32CB2</accession>
<sequence length="366" mass="41891">MNKVVLLCRPGFEKECAAEITDKAGQREIFGFARVKENAGYVIYECYQPDDGDKLIRELPFSSLIFARQWFVVGELLQHLPPEDRITPIVGMLQGVVEKGGELRVEVADTNESKELLKFCRKFTVPLRAVLRDAGGLANYETPKRPVVHVFFIAPGCCYTGYSYSNNNSPFYMGIPRLKFPADAPSRSTLKLEEAFHVFIPADEWDERLANGMWAVDLGACPGGWTYQLVKRNMWVYSVDNGPMAQSLMDTGQVTWLREDGFKFRPTRSNISWMVCDMVEKPAKVAALMAQWLVNGWCRETIFNLKLPMKKRYEEVSHNLAYIQAQLDEHGINAQIQARQLYHDREEVTVHVRRIWAAVGGRRDER</sequence>
<feature type="chain" id="PRO_0000314545" description="Ribosomal RNA large subunit methyltransferase M">
    <location>
        <begin position="1"/>
        <end position="366"/>
    </location>
</feature>
<feature type="active site" description="Proton acceptor" evidence="1">
    <location>
        <position position="306"/>
    </location>
</feature>
<feature type="binding site" evidence="1">
    <location>
        <position position="188"/>
    </location>
    <ligand>
        <name>S-adenosyl-L-methionine</name>
        <dbReference type="ChEBI" id="CHEBI:59789"/>
    </ligand>
</feature>
<feature type="binding site" evidence="1">
    <location>
        <begin position="221"/>
        <end position="224"/>
    </location>
    <ligand>
        <name>S-adenosyl-L-methionine</name>
        <dbReference type="ChEBI" id="CHEBI:59789"/>
    </ligand>
</feature>
<feature type="binding site" evidence="1">
    <location>
        <position position="240"/>
    </location>
    <ligand>
        <name>S-adenosyl-L-methionine</name>
        <dbReference type="ChEBI" id="CHEBI:59789"/>
    </ligand>
</feature>
<feature type="binding site" evidence="1">
    <location>
        <position position="260"/>
    </location>
    <ligand>
        <name>S-adenosyl-L-methionine</name>
        <dbReference type="ChEBI" id="CHEBI:59789"/>
    </ligand>
</feature>
<feature type="binding site" evidence="1">
    <location>
        <position position="277"/>
    </location>
    <ligand>
        <name>S-adenosyl-L-methionine</name>
        <dbReference type="ChEBI" id="CHEBI:59789"/>
    </ligand>
</feature>
<proteinExistence type="inferred from homology"/>
<keyword id="KW-0963">Cytoplasm</keyword>
<keyword id="KW-0489">Methyltransferase</keyword>
<keyword id="KW-1185">Reference proteome</keyword>
<keyword id="KW-0698">rRNA processing</keyword>
<keyword id="KW-0949">S-adenosyl-L-methionine</keyword>
<keyword id="KW-0808">Transferase</keyword>
<gene>
    <name evidence="1" type="primary">rlmM</name>
    <name type="ordered locus">SDY_3024</name>
</gene>
<comment type="function">
    <text evidence="1">Catalyzes the 2'-O-methylation at nucleotide C2498 in 23S rRNA.</text>
</comment>
<comment type="catalytic activity">
    <reaction evidence="1">
        <text>cytidine(2498) in 23S rRNA + S-adenosyl-L-methionine = 2'-O-methylcytidine(2498) in 23S rRNA + S-adenosyl-L-homocysteine + H(+)</text>
        <dbReference type="Rhea" id="RHEA:42788"/>
        <dbReference type="Rhea" id="RHEA-COMP:10244"/>
        <dbReference type="Rhea" id="RHEA-COMP:10245"/>
        <dbReference type="ChEBI" id="CHEBI:15378"/>
        <dbReference type="ChEBI" id="CHEBI:57856"/>
        <dbReference type="ChEBI" id="CHEBI:59789"/>
        <dbReference type="ChEBI" id="CHEBI:74495"/>
        <dbReference type="ChEBI" id="CHEBI:82748"/>
        <dbReference type="EC" id="2.1.1.186"/>
    </reaction>
</comment>
<comment type="subunit">
    <text evidence="1">Monomer.</text>
</comment>
<comment type="subcellular location">
    <subcellularLocation>
        <location evidence="1">Cytoplasm</location>
    </subcellularLocation>
</comment>
<comment type="similarity">
    <text evidence="1">Belongs to the class I-like SAM-binding methyltransferase superfamily. RNA methyltransferase RlmE family. RlmM subfamily.</text>
</comment>
<dbReference type="EC" id="2.1.1.186" evidence="1"/>
<dbReference type="EMBL" id="CP000034">
    <property type="protein sequence ID" value="ABB63043.1"/>
    <property type="molecule type" value="Genomic_DNA"/>
</dbReference>
<dbReference type="RefSeq" id="WP_001045534.1">
    <property type="nucleotide sequence ID" value="NC_007606.1"/>
</dbReference>
<dbReference type="RefSeq" id="YP_404534.1">
    <property type="nucleotide sequence ID" value="NC_007606.1"/>
</dbReference>
<dbReference type="SMR" id="Q32CB2"/>
<dbReference type="STRING" id="300267.SDY_3024"/>
<dbReference type="EnsemblBacteria" id="ABB63043">
    <property type="protein sequence ID" value="ABB63043"/>
    <property type="gene ID" value="SDY_3024"/>
</dbReference>
<dbReference type="KEGG" id="sdy:SDY_3024"/>
<dbReference type="PATRIC" id="fig|300267.13.peg.3630"/>
<dbReference type="HOGENOM" id="CLU_043780_0_0_6"/>
<dbReference type="Proteomes" id="UP000002716">
    <property type="component" value="Chromosome"/>
</dbReference>
<dbReference type="GO" id="GO:0005737">
    <property type="term" value="C:cytoplasm"/>
    <property type="evidence" value="ECO:0007669"/>
    <property type="project" value="UniProtKB-SubCell"/>
</dbReference>
<dbReference type="GO" id="GO:0008757">
    <property type="term" value="F:S-adenosylmethionine-dependent methyltransferase activity"/>
    <property type="evidence" value="ECO:0007669"/>
    <property type="project" value="UniProtKB-UniRule"/>
</dbReference>
<dbReference type="GO" id="GO:0032259">
    <property type="term" value="P:methylation"/>
    <property type="evidence" value="ECO:0007669"/>
    <property type="project" value="UniProtKB-KW"/>
</dbReference>
<dbReference type="GO" id="GO:0006364">
    <property type="term" value="P:rRNA processing"/>
    <property type="evidence" value="ECO:0007669"/>
    <property type="project" value="UniProtKB-UniRule"/>
</dbReference>
<dbReference type="FunFam" id="3.30.2300.20:FF:000001">
    <property type="entry name" value="Ribosomal RNA large subunit methyltransferase M"/>
    <property type="match status" value="1"/>
</dbReference>
<dbReference type="FunFam" id="3.30.70.2810:FF:000001">
    <property type="entry name" value="Ribosomal RNA large subunit methyltransferase M"/>
    <property type="match status" value="1"/>
</dbReference>
<dbReference type="FunFam" id="3.40.50.150:FF:000020">
    <property type="entry name" value="Ribosomal RNA large subunit methyltransferase M"/>
    <property type="match status" value="1"/>
</dbReference>
<dbReference type="Gene3D" id="3.30.2300.20">
    <property type="match status" value="1"/>
</dbReference>
<dbReference type="Gene3D" id="3.30.70.2810">
    <property type="match status" value="1"/>
</dbReference>
<dbReference type="Gene3D" id="3.40.50.150">
    <property type="entry name" value="Vaccinia Virus protein VP39"/>
    <property type="match status" value="1"/>
</dbReference>
<dbReference type="HAMAP" id="MF_01551">
    <property type="entry name" value="23SrRNA_methyltr_M"/>
    <property type="match status" value="1"/>
</dbReference>
<dbReference type="InterPro" id="IPR040739">
    <property type="entry name" value="RlmM_FDX"/>
</dbReference>
<dbReference type="InterPro" id="IPR048646">
    <property type="entry name" value="RlmM_THUMP-like"/>
</dbReference>
<dbReference type="InterPro" id="IPR002877">
    <property type="entry name" value="RNA_MeTrfase_FtsJ_dom"/>
</dbReference>
<dbReference type="InterPro" id="IPR011224">
    <property type="entry name" value="rRNA_MeTrfase_M"/>
</dbReference>
<dbReference type="InterPro" id="IPR029063">
    <property type="entry name" value="SAM-dependent_MTases_sf"/>
</dbReference>
<dbReference type="NCBIfam" id="NF008734">
    <property type="entry name" value="PRK11760.1"/>
    <property type="match status" value="1"/>
</dbReference>
<dbReference type="PANTHER" id="PTHR37524">
    <property type="entry name" value="RIBOSOMAL RNA LARGE SUBUNIT METHYLTRANSFERASE M"/>
    <property type="match status" value="1"/>
</dbReference>
<dbReference type="PANTHER" id="PTHR37524:SF2">
    <property type="entry name" value="RIBOSOMAL RNA METHYLTRANSFERASE FTSJ DOMAIN-CONTAINING PROTEIN"/>
    <property type="match status" value="1"/>
</dbReference>
<dbReference type="Pfam" id="PF01728">
    <property type="entry name" value="FtsJ"/>
    <property type="match status" value="1"/>
</dbReference>
<dbReference type="Pfam" id="PF18125">
    <property type="entry name" value="RlmM_FDX"/>
    <property type="match status" value="1"/>
</dbReference>
<dbReference type="Pfam" id="PF21239">
    <property type="entry name" value="RLMM_N"/>
    <property type="match status" value="1"/>
</dbReference>
<dbReference type="PIRSF" id="PIRSF028774">
    <property type="entry name" value="UCP028774"/>
    <property type="match status" value="1"/>
</dbReference>
<dbReference type="SUPFAM" id="SSF53335">
    <property type="entry name" value="S-adenosyl-L-methionine-dependent methyltransferases"/>
    <property type="match status" value="1"/>
</dbReference>
<organism>
    <name type="scientific">Shigella dysenteriae serotype 1 (strain Sd197)</name>
    <dbReference type="NCBI Taxonomy" id="300267"/>
    <lineage>
        <taxon>Bacteria</taxon>
        <taxon>Pseudomonadati</taxon>
        <taxon>Pseudomonadota</taxon>
        <taxon>Gammaproteobacteria</taxon>
        <taxon>Enterobacterales</taxon>
        <taxon>Enterobacteriaceae</taxon>
        <taxon>Shigella</taxon>
    </lineage>
</organism>
<reference key="1">
    <citation type="journal article" date="2005" name="Nucleic Acids Res.">
        <title>Genome dynamics and diversity of Shigella species, the etiologic agents of bacillary dysentery.</title>
        <authorList>
            <person name="Yang F."/>
            <person name="Yang J."/>
            <person name="Zhang X."/>
            <person name="Chen L."/>
            <person name="Jiang Y."/>
            <person name="Yan Y."/>
            <person name="Tang X."/>
            <person name="Wang J."/>
            <person name="Xiong Z."/>
            <person name="Dong J."/>
            <person name="Xue Y."/>
            <person name="Zhu Y."/>
            <person name="Xu X."/>
            <person name="Sun L."/>
            <person name="Chen S."/>
            <person name="Nie H."/>
            <person name="Peng J."/>
            <person name="Xu J."/>
            <person name="Wang Y."/>
            <person name="Yuan Z."/>
            <person name="Wen Y."/>
            <person name="Yao Z."/>
            <person name="Shen Y."/>
            <person name="Qiang B."/>
            <person name="Hou Y."/>
            <person name="Yu J."/>
            <person name="Jin Q."/>
        </authorList>
    </citation>
    <scope>NUCLEOTIDE SEQUENCE [LARGE SCALE GENOMIC DNA]</scope>
    <source>
        <strain>Sd197</strain>
    </source>
</reference>